<feature type="chain" id="PRO_0000222786" description="Putative mRNA-capping enzyme P5">
    <location>
        <begin position="1"/>
        <end position="801"/>
    </location>
</feature>
<feature type="strand" evidence="3">
    <location>
        <begin position="7"/>
        <end position="9"/>
    </location>
</feature>
<feature type="turn" evidence="3">
    <location>
        <begin position="12"/>
        <end position="14"/>
    </location>
</feature>
<feature type="helix" evidence="3">
    <location>
        <begin position="17"/>
        <end position="27"/>
    </location>
</feature>
<feature type="strand" evidence="3">
    <location>
        <begin position="33"/>
        <end position="37"/>
    </location>
</feature>
<feature type="helix" evidence="3">
    <location>
        <begin position="41"/>
        <end position="55"/>
    </location>
</feature>
<feature type="strand" evidence="3">
    <location>
        <begin position="58"/>
        <end position="62"/>
    </location>
</feature>
<feature type="strand" evidence="3">
    <location>
        <begin position="64"/>
        <end position="66"/>
    </location>
</feature>
<feature type="helix" evidence="3">
    <location>
        <begin position="68"/>
        <end position="80"/>
    </location>
</feature>
<feature type="turn" evidence="3">
    <location>
        <begin position="81"/>
        <end position="84"/>
    </location>
</feature>
<feature type="strand" evidence="4">
    <location>
        <begin position="85"/>
        <end position="87"/>
    </location>
</feature>
<feature type="strand" evidence="3">
    <location>
        <begin position="89"/>
        <end position="93"/>
    </location>
</feature>
<feature type="turn" evidence="3">
    <location>
        <begin position="97"/>
        <end position="99"/>
    </location>
</feature>
<feature type="helix" evidence="3">
    <location>
        <begin position="102"/>
        <end position="111"/>
    </location>
</feature>
<feature type="strand" evidence="3">
    <location>
        <begin position="115"/>
        <end position="118"/>
    </location>
</feature>
<feature type="helix" evidence="3">
    <location>
        <begin position="127"/>
        <end position="139"/>
    </location>
</feature>
<feature type="strand" evidence="3">
    <location>
        <begin position="149"/>
        <end position="151"/>
    </location>
</feature>
<feature type="helix" evidence="3">
    <location>
        <begin position="158"/>
        <end position="161"/>
    </location>
</feature>
<feature type="turn" evidence="3">
    <location>
        <begin position="164"/>
        <end position="168"/>
    </location>
</feature>
<feature type="helix" evidence="3">
    <location>
        <begin position="174"/>
        <end position="196"/>
    </location>
</feature>
<feature type="helix" evidence="3">
    <location>
        <begin position="201"/>
        <end position="203"/>
    </location>
</feature>
<feature type="strand" evidence="3">
    <location>
        <begin position="205"/>
        <end position="210"/>
    </location>
</feature>
<feature type="helix" evidence="3">
    <location>
        <begin position="215"/>
        <end position="221"/>
    </location>
</feature>
<feature type="strand" evidence="3">
    <location>
        <begin position="225"/>
        <end position="232"/>
    </location>
</feature>
<feature type="strand" evidence="3">
    <location>
        <begin position="237"/>
        <end position="240"/>
    </location>
</feature>
<feature type="strand" evidence="3">
    <location>
        <begin position="243"/>
        <end position="246"/>
    </location>
</feature>
<feature type="helix" evidence="3">
    <location>
        <begin position="267"/>
        <end position="277"/>
    </location>
</feature>
<feature type="strand" evidence="3">
    <location>
        <begin position="281"/>
        <end position="287"/>
    </location>
</feature>
<feature type="helix" evidence="3">
    <location>
        <begin position="292"/>
        <end position="296"/>
    </location>
</feature>
<feature type="strand" evidence="3">
    <location>
        <begin position="303"/>
        <end position="307"/>
    </location>
</feature>
<feature type="helix" evidence="3">
    <location>
        <begin position="313"/>
        <end position="323"/>
    </location>
</feature>
<feature type="strand" evidence="3">
    <location>
        <begin position="326"/>
        <end position="330"/>
    </location>
</feature>
<feature type="helix" evidence="3">
    <location>
        <begin position="346"/>
        <end position="349"/>
    </location>
</feature>
<feature type="strand" evidence="3">
    <location>
        <begin position="352"/>
        <end position="358"/>
    </location>
</feature>
<feature type="strand" evidence="3">
    <location>
        <begin position="363"/>
        <end position="365"/>
    </location>
</feature>
<feature type="helix" evidence="3">
    <location>
        <begin position="366"/>
        <end position="380"/>
    </location>
</feature>
<feature type="strand" evidence="3">
    <location>
        <begin position="384"/>
        <end position="395"/>
    </location>
</feature>
<feature type="strand" evidence="3">
    <location>
        <begin position="401"/>
        <end position="411"/>
    </location>
</feature>
<feature type="strand" evidence="3">
    <location>
        <begin position="421"/>
        <end position="425"/>
    </location>
</feature>
<feature type="strand" evidence="3">
    <location>
        <begin position="429"/>
        <end position="435"/>
    </location>
</feature>
<feature type="helix" evidence="3">
    <location>
        <begin position="437"/>
        <end position="448"/>
    </location>
</feature>
<feature type="helix" evidence="3">
    <location>
        <begin position="452"/>
        <end position="456"/>
    </location>
</feature>
<feature type="helix" evidence="3">
    <location>
        <begin position="459"/>
        <end position="463"/>
    </location>
</feature>
<feature type="helix" evidence="3">
    <location>
        <begin position="464"/>
        <end position="466"/>
    </location>
</feature>
<feature type="strand" evidence="3">
    <location>
        <begin position="467"/>
        <end position="470"/>
    </location>
</feature>
<feature type="helix" evidence="3">
    <location>
        <begin position="472"/>
        <end position="474"/>
    </location>
</feature>
<feature type="turn" evidence="6">
    <location>
        <begin position="478"/>
        <end position="480"/>
    </location>
</feature>
<feature type="strand" evidence="3">
    <location>
        <begin position="482"/>
        <end position="486"/>
    </location>
</feature>
<feature type="helix" evidence="3">
    <location>
        <begin position="487"/>
        <end position="490"/>
    </location>
</feature>
<feature type="helix" evidence="3">
    <location>
        <begin position="496"/>
        <end position="508"/>
    </location>
</feature>
<feature type="strand" evidence="3">
    <location>
        <begin position="512"/>
        <end position="519"/>
    </location>
</feature>
<feature type="helix" evidence="3">
    <location>
        <begin position="520"/>
        <end position="528"/>
    </location>
</feature>
<feature type="turn" evidence="3">
    <location>
        <begin position="534"/>
        <end position="536"/>
    </location>
</feature>
<feature type="strand" evidence="3">
    <location>
        <begin position="537"/>
        <end position="540"/>
    </location>
</feature>
<feature type="strand" evidence="3">
    <location>
        <begin position="543"/>
        <end position="546"/>
    </location>
</feature>
<feature type="strand" evidence="3">
    <location>
        <begin position="555"/>
        <end position="557"/>
    </location>
</feature>
<feature type="helix" evidence="3">
    <location>
        <begin position="561"/>
        <end position="566"/>
    </location>
</feature>
<feature type="strand" evidence="3">
    <location>
        <begin position="569"/>
        <end position="571"/>
    </location>
</feature>
<feature type="helix" evidence="3">
    <location>
        <begin position="574"/>
        <end position="580"/>
    </location>
</feature>
<feature type="turn" evidence="3">
    <location>
        <begin position="581"/>
        <end position="584"/>
    </location>
</feature>
<feature type="strand" evidence="3">
    <location>
        <begin position="590"/>
        <end position="592"/>
    </location>
</feature>
<feature type="helix" evidence="3">
    <location>
        <begin position="595"/>
        <end position="598"/>
    </location>
</feature>
<feature type="strand" evidence="3">
    <location>
        <begin position="600"/>
        <end position="605"/>
    </location>
</feature>
<feature type="helix" evidence="3">
    <location>
        <begin position="606"/>
        <end position="612"/>
    </location>
</feature>
<feature type="strand" evidence="4">
    <location>
        <begin position="613"/>
        <end position="615"/>
    </location>
</feature>
<feature type="helix" evidence="3">
    <location>
        <begin position="618"/>
        <end position="620"/>
    </location>
</feature>
<feature type="turn" evidence="3">
    <location>
        <begin position="623"/>
        <end position="627"/>
    </location>
</feature>
<feature type="helix" evidence="3">
    <location>
        <begin position="628"/>
        <end position="637"/>
    </location>
</feature>
<feature type="helix" evidence="3">
    <location>
        <begin position="641"/>
        <end position="658"/>
    </location>
</feature>
<feature type="helix" evidence="3">
    <location>
        <begin position="663"/>
        <end position="665"/>
    </location>
</feature>
<feature type="strand" evidence="3">
    <location>
        <begin position="666"/>
        <end position="668"/>
    </location>
</feature>
<feature type="strand" evidence="3">
    <location>
        <begin position="671"/>
        <end position="673"/>
    </location>
</feature>
<feature type="strand" evidence="3">
    <location>
        <begin position="675"/>
        <end position="680"/>
    </location>
</feature>
<feature type="strand" evidence="3">
    <location>
        <begin position="682"/>
        <end position="684"/>
    </location>
</feature>
<feature type="strand" evidence="3">
    <location>
        <begin position="691"/>
        <end position="693"/>
    </location>
</feature>
<feature type="strand" evidence="3">
    <location>
        <begin position="697"/>
        <end position="699"/>
    </location>
</feature>
<feature type="helix" evidence="3">
    <location>
        <begin position="703"/>
        <end position="711"/>
    </location>
</feature>
<feature type="turn" evidence="3">
    <location>
        <begin position="712"/>
        <end position="714"/>
    </location>
</feature>
<feature type="helix" evidence="3">
    <location>
        <begin position="719"/>
        <end position="728"/>
    </location>
</feature>
<feature type="strand" evidence="5">
    <location>
        <begin position="737"/>
        <end position="739"/>
    </location>
</feature>
<feature type="helix" evidence="3">
    <location>
        <begin position="741"/>
        <end position="744"/>
    </location>
</feature>
<feature type="strand" evidence="3">
    <location>
        <begin position="753"/>
        <end position="755"/>
    </location>
</feature>
<feature type="helix" evidence="3">
    <location>
        <begin position="761"/>
        <end position="778"/>
    </location>
</feature>
<feature type="turn" evidence="3">
    <location>
        <begin position="779"/>
        <end position="781"/>
    </location>
</feature>
<feature type="helix" evidence="3">
    <location>
        <begin position="785"/>
        <end position="798"/>
    </location>
</feature>
<accession>P14583</accession>
<sequence length="801" mass="90534">MSNPDYCIPNFSQTVNERTIIDIFTICRYRSPLVVFCLSHNELAKKYAQDVSMSSGTHVHIIDGSVEITASLYRTFRTIATQLLGRMQIVVFVTVDKSVVSTQVMKSIAWAFRGSFVELRNQSVDSSTLVSKLENLVSFAPLYNVPKCGPDYYGPTVYSELLSLATNARTHWYATIDYSMFTRSVLTGFIAKYFNEEAVPIDKRIVSIVGYNPPYVWTCLRHGIRPTYIEKSLPNPGGKGPFGLILPVINELVLKSKVKYVMHNPQIKLLCLDTFMLSTSMNILYIGAYPATHLLSLQLNGWTILAFDPKITSDWTDAMAKATGAKVIGVNKEFDFKSFSVQANQLNMFQNSKLSVIDDTWVETDYEKFQAEKQAYFEWLIDRTSIDVRLISMKWNRSKDTSVSHLLALLPQPYGASIREMRAFFHKKGASDIKILAAETEKYMDDFTAMSVSDQINTQKFMHCMITTVGDALKMDLDGGRAVIASYSLSNSSNPKERVLKFLSDANKAKAMVVFGAPNTHRLAYAKKVGLVLDSAIKMSKDLITFSNPTGRRWRDYGYSQSELYDAGYVEITIDQMVAYSSDVYNGVGYFANSTYNDLFSWYIPKWYVHKRMLMQDIRLSPAALVKCFTTLIRNICYVPHETYYRFRGILVDKYLRSKNVDPSQYSIVGSGSKTFTVLNHFEVPHECGPLVFEASTDVNISGHLLSLAIAAHFVASPMILWAEQMKYMAVDRMLPPNLDKSLFFDNKVTPSGALQRWHSREEVLLAAEICESYAAMMLNNKHSPDIIGTLKSAINLVFKI</sequence>
<keyword id="KW-0002">3D-structure</keyword>
<keyword id="KW-0342">GTP-binding</keyword>
<keyword id="KW-1035">Host cytoplasm</keyword>
<keyword id="KW-0506">mRNA capping</keyword>
<keyword id="KW-0507">mRNA processing</keyword>
<keyword id="KW-0547">Nucleotide-binding</keyword>
<keyword id="KW-0548">Nucleotidyltransferase</keyword>
<keyword id="KW-0694">RNA-binding</keyword>
<keyword id="KW-0808">Transferase</keyword>
<keyword id="KW-0946">Virion</keyword>
<name>MCE_RDVA</name>
<reference key="1">
    <citation type="journal article" date="1989" name="Nucleic Acids Res.">
        <title>Nucleotide sequence of rice dwarf virus segment 5.</title>
        <authorList>
            <person name="Suzuki N."/>
            <person name="Watanabe Y."/>
            <person name="Kusano T."/>
            <person name="Kitagawa Y."/>
        </authorList>
    </citation>
    <scope>NUCLEOTIDE SEQUENCE [GENOMIC RNA]</scope>
</reference>
<reference key="2">
    <citation type="journal article" date="1990" name="Virology">
        <title>Sequence analysis of rice dwarf phytoreovirus genome segments S4, S5, and S6: comparison with the equivalent wound tumor virus segments.</title>
        <authorList>
            <person name="Suzuki N."/>
            <person name="Watanabe Y."/>
            <person name="Kusano T."/>
            <person name="Kitagawa Y."/>
        </authorList>
    </citation>
    <scope>NUCLEOTIDE SEQUENCE [GENOMIC RNA]</scope>
</reference>
<protein>
    <recommendedName>
        <fullName>Putative mRNA-capping enzyme P5</fullName>
    </recommendedName>
    <alternativeName>
        <fullName>Structural protein 5</fullName>
    </alternativeName>
    <alternativeName>
        <fullName>mRNA guanylyltransferase</fullName>
        <ecNumber>2.7.7.50</ecNumber>
    </alternativeName>
</protein>
<proteinExistence type="evidence at protein level"/>
<comment type="function">
    <text evidence="1 2">Enzyme involved in mRNA capping (Potential). Binds to GTP and might have guanylyltransferase activity. Together with the RNA-directed RNA polymerase P1 and protein P7, forms an transcriptional complex positioned near the channels situated at each of the five-fold vertices of the core (By similarity).</text>
</comment>
<comment type="catalytic activity">
    <reaction>
        <text>a 5'-end diphospho-ribonucleoside in mRNA + GTP + H(+) = a 5'-end (5'-triphosphoguanosine)-ribonucleoside in mRNA + diphosphate</text>
        <dbReference type="Rhea" id="RHEA:67012"/>
        <dbReference type="Rhea" id="RHEA-COMP:17165"/>
        <dbReference type="Rhea" id="RHEA-COMP:17166"/>
        <dbReference type="ChEBI" id="CHEBI:15378"/>
        <dbReference type="ChEBI" id="CHEBI:33019"/>
        <dbReference type="ChEBI" id="CHEBI:37565"/>
        <dbReference type="ChEBI" id="CHEBI:167616"/>
        <dbReference type="ChEBI" id="CHEBI:167617"/>
        <dbReference type="EC" id="2.7.7.50"/>
    </reaction>
</comment>
<comment type="pathway">
    <text>mRNA processing; mRNA capping.</text>
</comment>
<comment type="subcellular location">
    <subcellularLocation>
        <location evidence="1">Virion</location>
    </subcellularLocation>
    <subcellularLocation>
        <location evidence="1">Host cytoplasm</location>
    </subcellularLocation>
    <text evidence="1">Located inside the inner capsid. Found in the interior of spherical cytoplasmic structures, called virus factories, that appear early after infection and are the site of viral replication and packaging.</text>
</comment>
<comment type="similarity">
    <text evidence="2">Belongs to the phytoreovirus protein P5 family.</text>
</comment>
<dbReference type="EC" id="2.7.7.50"/>
<dbReference type="EMBL" id="D90033">
    <property type="protein sequence ID" value="BAA14081.1"/>
    <property type="molecule type" value="Genomic_RNA"/>
</dbReference>
<dbReference type="PIR" id="S06751">
    <property type="entry name" value="MWXRR5"/>
</dbReference>
<dbReference type="PDB" id="5X6X">
    <property type="method" value="X-ray"/>
    <property type="resolution" value="2.10 A"/>
    <property type="chains" value="A/B/C/D=1-801"/>
</dbReference>
<dbReference type="PDB" id="5X6Y">
    <property type="method" value="X-ray"/>
    <property type="resolution" value="2.10 A"/>
    <property type="chains" value="A/B/C/D=1-801"/>
</dbReference>
<dbReference type="PDB" id="5X6Z">
    <property type="method" value="X-ray"/>
    <property type="resolution" value="2.10 A"/>
    <property type="chains" value="A/B/C/D=1-801"/>
</dbReference>
<dbReference type="PDB" id="5X70">
    <property type="method" value="X-ray"/>
    <property type="resolution" value="3.30 A"/>
    <property type="chains" value="A/B/C/D=1-801"/>
</dbReference>
<dbReference type="PDB" id="5X71">
    <property type="method" value="X-ray"/>
    <property type="resolution" value="2.57 A"/>
    <property type="chains" value="A/B=1-801"/>
</dbReference>
<dbReference type="PDBsum" id="5X6X"/>
<dbReference type="PDBsum" id="5X6Y"/>
<dbReference type="PDBsum" id="5X6Z"/>
<dbReference type="PDBsum" id="5X70"/>
<dbReference type="PDBsum" id="5X71"/>
<dbReference type="SMR" id="P14583"/>
<dbReference type="UniPathway" id="UPA00922"/>
<dbReference type="GO" id="GO:0030430">
    <property type="term" value="C:host cell cytoplasm"/>
    <property type="evidence" value="ECO:0007669"/>
    <property type="project" value="UniProtKB-SubCell"/>
</dbReference>
<dbReference type="GO" id="GO:0044423">
    <property type="term" value="C:virion component"/>
    <property type="evidence" value="ECO:0007669"/>
    <property type="project" value="UniProtKB-KW"/>
</dbReference>
<dbReference type="GO" id="GO:0005525">
    <property type="term" value="F:GTP binding"/>
    <property type="evidence" value="ECO:0007669"/>
    <property type="project" value="UniProtKB-KW"/>
</dbReference>
<dbReference type="GO" id="GO:0004484">
    <property type="term" value="F:mRNA guanylyltransferase activity"/>
    <property type="evidence" value="ECO:0007669"/>
    <property type="project" value="UniProtKB-EC"/>
</dbReference>
<dbReference type="GO" id="GO:0003723">
    <property type="term" value="F:RNA binding"/>
    <property type="evidence" value="ECO:0007669"/>
    <property type="project" value="UniProtKB-KW"/>
</dbReference>
<dbReference type="GO" id="GO:0006370">
    <property type="term" value="P:7-methylguanosine mRNA capping"/>
    <property type="evidence" value="ECO:0007669"/>
    <property type="project" value="UniProtKB-UniPathway"/>
</dbReference>
<dbReference type="CDD" id="cd20759">
    <property type="entry name" value="capping_2-OMTase_Phytoreovirus"/>
    <property type="match status" value="1"/>
</dbReference>
<dbReference type="InterPro" id="IPR044310">
    <property type="entry name" value="P5_Phytoreov"/>
</dbReference>
<evidence type="ECO:0000250" key="1"/>
<evidence type="ECO:0000305" key="2"/>
<evidence type="ECO:0007829" key="3">
    <source>
        <dbReference type="PDB" id="5X6X"/>
    </source>
</evidence>
<evidence type="ECO:0007829" key="4">
    <source>
        <dbReference type="PDB" id="5X6Y"/>
    </source>
</evidence>
<evidence type="ECO:0007829" key="5">
    <source>
        <dbReference type="PDB" id="5X70"/>
    </source>
</evidence>
<evidence type="ECO:0007829" key="6">
    <source>
        <dbReference type="PDB" id="5X71"/>
    </source>
</evidence>
<organismHost>
    <name type="scientific">Alopecurus aequalis</name>
    <dbReference type="NCBI Taxonomy" id="114194"/>
</organismHost>
<organismHost>
    <name type="scientific">Echinochloa crus-galli</name>
    <name type="common">Barnyard grass</name>
    <name type="synonym">Panicum crus-galli</name>
    <dbReference type="NCBI Taxonomy" id="90397"/>
</organismHost>
<organismHost>
    <name type="scientific">Nephotettix cincticeps</name>
    <name type="common">Green rice leafhopper</name>
    <name type="synonym">Selenocephalus cincticeps</name>
    <dbReference type="NCBI Taxonomy" id="94400"/>
</organismHost>
<organismHost>
    <name type="scientific">Oryza sativa</name>
    <name type="common">Rice</name>
    <dbReference type="NCBI Taxonomy" id="4530"/>
</organismHost>
<organismHost>
    <name type="scientific">Paspalum</name>
    <dbReference type="NCBI Taxonomy" id="147271"/>
</organismHost>
<organism>
    <name type="scientific">Rice dwarf virus (isolate Akita)</name>
    <name type="common">RDV</name>
    <dbReference type="NCBI Taxonomy" id="142803"/>
    <lineage>
        <taxon>Viruses</taxon>
        <taxon>Riboviria</taxon>
        <taxon>Orthornavirae</taxon>
        <taxon>Duplornaviricota</taxon>
        <taxon>Resentoviricetes</taxon>
        <taxon>Reovirales</taxon>
        <taxon>Sedoreoviridae</taxon>
        <taxon>Phytoreovirus</taxon>
        <taxon>Rice dwarf virus</taxon>
    </lineage>
</organism>